<protein>
    <recommendedName>
        <fullName>Alcohol dehydrogenase</fullName>
        <shortName>ADH</shortName>
        <ecNumber>1.1.1.1</ecNumber>
    </recommendedName>
</protein>
<proteinExistence type="evidence at protein level"/>
<reference key="1">
    <citation type="journal article" date="1994" name="Biochim. Biophys. Acta">
        <title>Gene structure and amino acid sequences of alcohol dehydrogenases of Bacillus stearothermophilus.</title>
        <authorList>
            <person name="Robinson G.A."/>
            <person name="Bailey C.J."/>
            <person name="Dowds B.C.A."/>
        </authorList>
    </citation>
    <scope>NUCLEOTIDE SEQUENCE [GENOMIC DNA]</scope>
    <scope>PROTEIN SEQUENCE OF 1-40</scope>
    <source>
        <strain>DSM 2334 / Var. Non-diastaticus</strain>
    </source>
</reference>
<keyword id="KW-0002">3D-structure</keyword>
<keyword id="KW-0903">Direct protein sequencing</keyword>
<keyword id="KW-0479">Metal-binding</keyword>
<keyword id="KW-0520">NAD</keyword>
<keyword id="KW-0560">Oxidoreductase</keyword>
<keyword id="KW-0862">Zinc</keyword>
<feature type="chain" id="PRO_0000160737" description="Alcohol dehydrogenase">
    <location>
        <begin position="1"/>
        <end position="339"/>
    </location>
</feature>
<feature type="binding site" evidence="1">
    <location>
        <position position="38"/>
    </location>
    <ligand>
        <name>Zn(2+)</name>
        <dbReference type="ChEBI" id="CHEBI:29105"/>
        <label>1</label>
        <note>catalytic</note>
    </ligand>
</feature>
<feature type="binding site" evidence="1">
    <location>
        <position position="61"/>
    </location>
    <ligand>
        <name>Zn(2+)</name>
        <dbReference type="ChEBI" id="CHEBI:29105"/>
        <label>1</label>
        <note>catalytic</note>
    </ligand>
</feature>
<feature type="binding site" evidence="1">
    <location>
        <position position="92"/>
    </location>
    <ligand>
        <name>Zn(2+)</name>
        <dbReference type="ChEBI" id="CHEBI:29105"/>
        <label>2</label>
    </ligand>
</feature>
<feature type="binding site" evidence="1">
    <location>
        <position position="95"/>
    </location>
    <ligand>
        <name>Zn(2+)</name>
        <dbReference type="ChEBI" id="CHEBI:29105"/>
        <label>2</label>
    </ligand>
</feature>
<feature type="binding site" evidence="1">
    <location>
        <position position="98"/>
    </location>
    <ligand>
        <name>Zn(2+)</name>
        <dbReference type="ChEBI" id="CHEBI:29105"/>
        <label>2</label>
    </ligand>
</feature>
<feature type="binding site" evidence="1">
    <location>
        <position position="106"/>
    </location>
    <ligand>
        <name>Zn(2+)</name>
        <dbReference type="ChEBI" id="CHEBI:29105"/>
        <label>2</label>
    </ligand>
</feature>
<feature type="binding site" evidence="1">
    <location>
        <position position="148"/>
    </location>
    <ligand>
        <name>Zn(2+)</name>
        <dbReference type="ChEBI" id="CHEBI:29105"/>
        <label>1</label>
        <note>catalytic</note>
    </ligand>
</feature>
<feature type="binding site" evidence="1">
    <location>
        <begin position="172"/>
        <end position="177"/>
    </location>
    <ligand>
        <name>NAD(+)</name>
        <dbReference type="ChEBI" id="CHEBI:57540"/>
    </ligand>
</feature>
<feature type="binding site" evidence="1">
    <location>
        <position position="195"/>
    </location>
    <ligand>
        <name>NAD(+)</name>
        <dbReference type="ChEBI" id="CHEBI:57540"/>
    </ligand>
</feature>
<feature type="binding site" evidence="1">
    <location>
        <position position="200"/>
    </location>
    <ligand>
        <name>NAD(+)</name>
        <dbReference type="ChEBI" id="CHEBI:57540"/>
    </ligand>
</feature>
<feature type="binding site" evidence="1">
    <location>
        <begin position="260"/>
        <end position="262"/>
    </location>
    <ligand>
        <name>NAD(+)</name>
        <dbReference type="ChEBI" id="CHEBI:57540"/>
    </ligand>
</feature>
<feature type="binding site" evidence="1">
    <location>
        <position position="331"/>
    </location>
    <ligand>
        <name>NAD(+)</name>
        <dbReference type="ChEBI" id="CHEBI:57540"/>
    </ligand>
</feature>
<feature type="strand" evidence="3">
    <location>
        <begin position="2"/>
        <end position="6"/>
    </location>
</feature>
<feature type="strand" evidence="3">
    <location>
        <begin position="14"/>
        <end position="17"/>
    </location>
</feature>
<feature type="strand" evidence="3">
    <location>
        <begin position="27"/>
        <end position="37"/>
    </location>
</feature>
<feature type="helix" evidence="3">
    <location>
        <begin position="39"/>
        <end position="46"/>
    </location>
</feature>
<feature type="strand" evidence="3">
    <location>
        <begin position="49"/>
        <end position="51"/>
    </location>
</feature>
<feature type="strand" evidence="3">
    <location>
        <begin position="55"/>
        <end position="57"/>
    </location>
</feature>
<feature type="strand" evidence="3">
    <location>
        <begin position="63"/>
        <end position="70"/>
    </location>
</feature>
<feature type="strand" evidence="3">
    <location>
        <begin position="82"/>
        <end position="85"/>
    </location>
</feature>
<feature type="strand" evidence="3">
    <location>
        <begin position="87"/>
        <end position="90"/>
    </location>
</feature>
<feature type="strand" evidence="3">
    <location>
        <begin position="93"/>
        <end position="95"/>
    </location>
</feature>
<feature type="helix" evidence="3">
    <location>
        <begin position="96"/>
        <end position="99"/>
    </location>
</feature>
<feature type="helix" evidence="3">
    <location>
        <begin position="103"/>
        <end position="105"/>
    </location>
</feature>
<feature type="turn" evidence="3">
    <location>
        <begin position="112"/>
        <end position="114"/>
    </location>
</feature>
<feature type="strand" evidence="3">
    <location>
        <begin position="119"/>
        <end position="127"/>
    </location>
</feature>
<feature type="turn" evidence="3">
    <location>
        <begin position="128"/>
        <end position="130"/>
    </location>
</feature>
<feature type="helix" evidence="3">
    <location>
        <begin position="140"/>
        <end position="143"/>
    </location>
</feature>
<feature type="helix" evidence="3">
    <location>
        <begin position="144"/>
        <end position="147"/>
    </location>
</feature>
<feature type="helix" evidence="3">
    <location>
        <begin position="149"/>
        <end position="159"/>
    </location>
</feature>
<feature type="strand" evidence="3">
    <location>
        <begin position="166"/>
        <end position="171"/>
    </location>
</feature>
<feature type="helix" evidence="3">
    <location>
        <begin position="177"/>
        <end position="186"/>
    </location>
</feature>
<feature type="strand" evidence="3">
    <location>
        <begin position="190"/>
        <end position="196"/>
    </location>
</feature>
<feature type="helix" evidence="3">
    <location>
        <begin position="198"/>
        <end position="207"/>
    </location>
</feature>
<feature type="strand" evidence="3">
    <location>
        <begin position="210"/>
        <end position="214"/>
    </location>
</feature>
<feature type="turn" evidence="3">
    <location>
        <begin position="215"/>
        <end position="217"/>
    </location>
</feature>
<feature type="helix" evidence="3">
    <location>
        <begin position="220"/>
        <end position="228"/>
    </location>
</feature>
<feature type="strand" evidence="3">
    <location>
        <begin position="229"/>
        <end position="236"/>
    </location>
</feature>
<feature type="helix" evidence="3">
    <location>
        <begin position="241"/>
        <end position="249"/>
    </location>
</feature>
<feature type="strand" evidence="3">
    <location>
        <begin position="251"/>
        <end position="259"/>
    </location>
</feature>
<feature type="strand" evidence="3">
    <location>
        <begin position="267"/>
        <end position="269"/>
    </location>
</feature>
<feature type="helix" evidence="3">
    <location>
        <begin position="271"/>
        <end position="277"/>
    </location>
</feature>
<feature type="strand" evidence="3">
    <location>
        <begin position="280"/>
        <end position="283"/>
    </location>
</feature>
<feature type="helix" evidence="3">
    <location>
        <begin position="289"/>
        <end position="300"/>
    </location>
</feature>
<feature type="strand" evidence="3">
    <location>
        <begin position="308"/>
        <end position="312"/>
    </location>
</feature>
<feature type="helix" evidence="3">
    <location>
        <begin position="313"/>
        <end position="315"/>
    </location>
</feature>
<feature type="helix" evidence="3">
    <location>
        <begin position="316"/>
        <end position="324"/>
    </location>
</feature>
<feature type="strand" evidence="3">
    <location>
        <begin position="329"/>
        <end position="335"/>
    </location>
</feature>
<accession>P42327</accession>
<name>ADH2_GEOSE</name>
<evidence type="ECO:0000250" key="1"/>
<evidence type="ECO:0000305" key="2"/>
<evidence type="ECO:0007829" key="3">
    <source>
        <dbReference type="PDB" id="6IQD"/>
    </source>
</evidence>
<sequence>MKAAVVNEFKKALEIKEVERPKLEEGEVLVKIEACGVCHTDLHAAHGDWPIKPKLPLIPGHEGVGIVVEVAKGVKSIKVGDRVGIPWLYSACGECEYCLTGQETLCPHQLNGGYSVDGGYAEYCKAPADYVAKIPDNLDPVEVAPILCAGVTTYKALKVSGARPGEWVAIYGIGGLGHIALQYAKAMGLNVVAVDISDEKSKLAKDLGADIAINGLKEDPVKAIHDQVGGVHAAISVAVNKKAFEQAYQSVKRGGTLVVVGLPNADLPIPIFDTVLNGVSVKGSIVGTRKDMQEALDFAARGKVRPIVETAELEEINEVFERMEKGKINGRIVLKLKED</sequence>
<comment type="function">
    <text>Active with primary alcohols, including methanol.</text>
</comment>
<comment type="catalytic activity">
    <reaction>
        <text>a primary alcohol + NAD(+) = an aldehyde + NADH + H(+)</text>
        <dbReference type="Rhea" id="RHEA:10736"/>
        <dbReference type="ChEBI" id="CHEBI:15378"/>
        <dbReference type="ChEBI" id="CHEBI:15734"/>
        <dbReference type="ChEBI" id="CHEBI:17478"/>
        <dbReference type="ChEBI" id="CHEBI:57540"/>
        <dbReference type="ChEBI" id="CHEBI:57945"/>
        <dbReference type="EC" id="1.1.1.1"/>
    </reaction>
</comment>
<comment type="catalytic activity">
    <reaction>
        <text>a secondary alcohol + NAD(+) = a ketone + NADH + H(+)</text>
        <dbReference type="Rhea" id="RHEA:10740"/>
        <dbReference type="ChEBI" id="CHEBI:15378"/>
        <dbReference type="ChEBI" id="CHEBI:17087"/>
        <dbReference type="ChEBI" id="CHEBI:35681"/>
        <dbReference type="ChEBI" id="CHEBI:57540"/>
        <dbReference type="ChEBI" id="CHEBI:57945"/>
        <dbReference type="EC" id="1.1.1.1"/>
    </reaction>
</comment>
<comment type="cofactor">
    <cofactor evidence="1">
        <name>Zn(2+)</name>
        <dbReference type="ChEBI" id="CHEBI:29105"/>
    </cofactor>
    <text evidence="1">Binds 2 Zn(2+) ions per subunit.</text>
</comment>
<comment type="activity regulation">
    <text>The rate-limiting step is NADH release. Catabolite repression.</text>
</comment>
<comment type="similarity">
    <text evidence="2">Belongs to the zinc-containing alcohol dehydrogenase family.</text>
</comment>
<organism>
    <name type="scientific">Geobacillus stearothermophilus</name>
    <name type="common">Bacillus stearothermophilus</name>
    <dbReference type="NCBI Taxonomy" id="1422"/>
    <lineage>
        <taxon>Bacteria</taxon>
        <taxon>Bacillati</taxon>
        <taxon>Bacillota</taxon>
        <taxon>Bacilli</taxon>
        <taxon>Bacillales</taxon>
        <taxon>Anoxybacillaceae</taxon>
        <taxon>Geobacillus</taxon>
    </lineage>
</organism>
<dbReference type="EC" id="1.1.1.1"/>
<dbReference type="EMBL" id="Z25544">
    <property type="protein sequence ID" value="CAA80989.1"/>
    <property type="molecule type" value="Genomic_DNA"/>
</dbReference>
<dbReference type="PIR" id="S47643">
    <property type="entry name" value="S47643"/>
</dbReference>
<dbReference type="PDB" id="6IQD">
    <property type="method" value="X-ray"/>
    <property type="resolution" value="2.84 A"/>
    <property type="chains" value="A/B/C/D/E/F/G/H=1-339"/>
</dbReference>
<dbReference type="PDBsum" id="6IQD"/>
<dbReference type="SMR" id="P42327"/>
<dbReference type="GO" id="GO:0004022">
    <property type="term" value="F:alcohol dehydrogenase (NAD+) activity"/>
    <property type="evidence" value="ECO:0007669"/>
    <property type="project" value="UniProtKB-EC"/>
</dbReference>
<dbReference type="GO" id="GO:0008270">
    <property type="term" value="F:zinc ion binding"/>
    <property type="evidence" value="ECO:0007669"/>
    <property type="project" value="InterPro"/>
</dbReference>
<dbReference type="CDD" id="cd08297">
    <property type="entry name" value="CAD3"/>
    <property type="match status" value="1"/>
</dbReference>
<dbReference type="FunFam" id="3.40.50.720:FF:000039">
    <property type="entry name" value="Alcohol dehydrogenase AdhP"/>
    <property type="match status" value="1"/>
</dbReference>
<dbReference type="FunFam" id="3.90.180.10:FF:000002">
    <property type="entry name" value="Alcohol dehydrogenase AdhP"/>
    <property type="match status" value="1"/>
</dbReference>
<dbReference type="Gene3D" id="3.90.180.10">
    <property type="entry name" value="Medium-chain alcohol dehydrogenases, catalytic domain"/>
    <property type="match status" value="1"/>
</dbReference>
<dbReference type="Gene3D" id="3.40.50.720">
    <property type="entry name" value="NAD(P)-binding Rossmann-like Domain"/>
    <property type="match status" value="1"/>
</dbReference>
<dbReference type="InterPro" id="IPR013149">
    <property type="entry name" value="ADH-like_C"/>
</dbReference>
<dbReference type="InterPro" id="IPR013154">
    <property type="entry name" value="ADH-like_N"/>
</dbReference>
<dbReference type="InterPro" id="IPR002328">
    <property type="entry name" value="ADH_Zn_CS"/>
</dbReference>
<dbReference type="InterPro" id="IPR011032">
    <property type="entry name" value="GroES-like_sf"/>
</dbReference>
<dbReference type="InterPro" id="IPR036291">
    <property type="entry name" value="NAD(P)-bd_dom_sf"/>
</dbReference>
<dbReference type="InterPro" id="IPR020843">
    <property type="entry name" value="PKS_ER"/>
</dbReference>
<dbReference type="NCBIfam" id="NF006940">
    <property type="entry name" value="PRK09422.1"/>
    <property type="match status" value="1"/>
</dbReference>
<dbReference type="PANTHER" id="PTHR42940">
    <property type="entry name" value="ALCOHOL DEHYDROGENASE 1-RELATED"/>
    <property type="match status" value="1"/>
</dbReference>
<dbReference type="PANTHER" id="PTHR42940:SF8">
    <property type="entry name" value="VACUOLAR PROTEIN SORTING-ASSOCIATED PROTEIN 11"/>
    <property type="match status" value="1"/>
</dbReference>
<dbReference type="Pfam" id="PF08240">
    <property type="entry name" value="ADH_N"/>
    <property type="match status" value="1"/>
</dbReference>
<dbReference type="Pfam" id="PF00107">
    <property type="entry name" value="ADH_zinc_N"/>
    <property type="match status" value="1"/>
</dbReference>
<dbReference type="SMART" id="SM00829">
    <property type="entry name" value="PKS_ER"/>
    <property type="match status" value="1"/>
</dbReference>
<dbReference type="SUPFAM" id="SSF50129">
    <property type="entry name" value="GroES-like"/>
    <property type="match status" value="1"/>
</dbReference>
<dbReference type="SUPFAM" id="SSF51735">
    <property type="entry name" value="NAD(P)-binding Rossmann-fold domains"/>
    <property type="match status" value="1"/>
</dbReference>
<dbReference type="PROSITE" id="PS00059">
    <property type="entry name" value="ADH_ZINC"/>
    <property type="match status" value="1"/>
</dbReference>
<gene>
    <name type="primary">adh</name>
</gene>